<gene>
    <name type="primary">BOP3</name>
    <name type="ordered locus">YNL042W</name>
    <name type="ORF">N2670</name>
</gene>
<accession>P53958</accession>
<accession>D6W1D7</accession>
<evidence type="ECO:0000256" key="1">
    <source>
        <dbReference type="SAM" id="MobiDB-lite"/>
    </source>
</evidence>
<evidence type="ECO:0000269" key="2">
    <source>
    </source>
</evidence>
<evidence type="ECO:0000269" key="3">
    <source>
    </source>
</evidence>
<name>BOP3_YEAST</name>
<proteinExistence type="evidence at protein level"/>
<feature type="chain" id="PRO_0000203456" description="Protein BOP3">
    <location>
        <begin position="1"/>
        <end position="396"/>
    </location>
</feature>
<feature type="region of interest" description="Disordered" evidence="1">
    <location>
        <begin position="1"/>
        <end position="22"/>
    </location>
</feature>
<feature type="region of interest" description="Disordered" evidence="1">
    <location>
        <begin position="98"/>
        <end position="126"/>
    </location>
</feature>
<feature type="region of interest" description="Disordered" evidence="1">
    <location>
        <begin position="145"/>
        <end position="168"/>
    </location>
</feature>
<feature type="region of interest" description="Disordered" evidence="1">
    <location>
        <begin position="203"/>
        <end position="239"/>
    </location>
</feature>
<feature type="region of interest" description="Disordered" evidence="1">
    <location>
        <begin position="254"/>
        <end position="274"/>
    </location>
</feature>
<feature type="region of interest" description="Disordered" evidence="1">
    <location>
        <begin position="355"/>
        <end position="396"/>
    </location>
</feature>
<feature type="compositionally biased region" description="Polar residues" evidence="1">
    <location>
        <begin position="111"/>
        <end position="124"/>
    </location>
</feature>
<feature type="compositionally biased region" description="Polar residues" evidence="1">
    <location>
        <begin position="159"/>
        <end position="168"/>
    </location>
</feature>
<feature type="compositionally biased region" description="Polar residues" evidence="1">
    <location>
        <begin position="210"/>
        <end position="230"/>
    </location>
</feature>
<feature type="compositionally biased region" description="Basic and acidic residues" evidence="1">
    <location>
        <begin position="355"/>
        <end position="369"/>
    </location>
</feature>
<feature type="compositionally biased region" description="Polar residues" evidence="1">
    <location>
        <begin position="370"/>
        <end position="396"/>
    </location>
</feature>
<keyword id="KW-0963">Cytoplasm</keyword>
<keyword id="KW-0539">Nucleus</keyword>
<keyword id="KW-1185">Reference proteome</keyword>
<dbReference type="EMBL" id="Z71318">
    <property type="protein sequence ID" value="CAA95909.1"/>
    <property type="molecule type" value="Genomic_DNA"/>
</dbReference>
<dbReference type="EMBL" id="X94547">
    <property type="protein sequence ID" value="CAA64240.1"/>
    <property type="molecule type" value="Genomic_DNA"/>
</dbReference>
<dbReference type="EMBL" id="BK006947">
    <property type="protein sequence ID" value="DAA10503.1"/>
    <property type="molecule type" value="Genomic_DNA"/>
</dbReference>
<dbReference type="PIR" id="S62964">
    <property type="entry name" value="S62964"/>
</dbReference>
<dbReference type="RefSeq" id="NP_014356.1">
    <property type="nucleotide sequence ID" value="NM_001182881.1"/>
</dbReference>
<dbReference type="BioGRID" id="35782">
    <property type="interactions" value="52"/>
</dbReference>
<dbReference type="DIP" id="DIP-4192N"/>
<dbReference type="FunCoup" id="P53958">
    <property type="interactions" value="78"/>
</dbReference>
<dbReference type="IntAct" id="P53958">
    <property type="interactions" value="18"/>
</dbReference>
<dbReference type="MINT" id="P53958"/>
<dbReference type="STRING" id="4932.YNL042W"/>
<dbReference type="GlyGen" id="P53958">
    <property type="glycosylation" value="1 site"/>
</dbReference>
<dbReference type="iPTMnet" id="P53958"/>
<dbReference type="PaxDb" id="4932-YNL042W"/>
<dbReference type="PeptideAtlas" id="P53958"/>
<dbReference type="EnsemblFungi" id="YNL042W_mRNA">
    <property type="protein sequence ID" value="YNL042W"/>
    <property type="gene ID" value="YNL042W"/>
</dbReference>
<dbReference type="GeneID" id="855686"/>
<dbReference type="KEGG" id="sce:YNL042W"/>
<dbReference type="AGR" id="SGD:S000004987"/>
<dbReference type="SGD" id="S000004987">
    <property type="gene designation" value="BOP3"/>
</dbReference>
<dbReference type="VEuPathDB" id="FungiDB:YNL042W"/>
<dbReference type="eggNOG" id="ENOG502S5HG">
    <property type="taxonomic scope" value="Eukaryota"/>
</dbReference>
<dbReference type="HOGENOM" id="CLU_058506_0_0_1"/>
<dbReference type="InParanoid" id="P53958"/>
<dbReference type="OMA" id="WAFSENA"/>
<dbReference type="OrthoDB" id="4095763at2759"/>
<dbReference type="BioCyc" id="YEAST:G3O-33078-MONOMER"/>
<dbReference type="BioGRID-ORCS" id="855686">
    <property type="hits" value="1 hit in 10 CRISPR screens"/>
</dbReference>
<dbReference type="PRO" id="PR:P53958"/>
<dbReference type="Proteomes" id="UP000002311">
    <property type="component" value="Chromosome XIV"/>
</dbReference>
<dbReference type="RNAct" id="P53958">
    <property type="molecule type" value="protein"/>
</dbReference>
<dbReference type="GO" id="GO:0005737">
    <property type="term" value="C:cytoplasm"/>
    <property type="evidence" value="ECO:0007005"/>
    <property type="project" value="SGD"/>
</dbReference>
<dbReference type="GO" id="GO:0005634">
    <property type="term" value="C:nucleus"/>
    <property type="evidence" value="ECO:0007005"/>
    <property type="project" value="SGD"/>
</dbReference>
<dbReference type="GO" id="GO:0071406">
    <property type="term" value="P:cellular response to methylmercury"/>
    <property type="evidence" value="ECO:0000315"/>
    <property type="project" value="SGD"/>
</dbReference>
<dbReference type="InterPro" id="IPR021216">
    <property type="entry name" value="DUF2722"/>
</dbReference>
<dbReference type="Pfam" id="PF10846">
    <property type="entry name" value="DUF2722"/>
    <property type="match status" value="1"/>
</dbReference>
<organism>
    <name type="scientific">Saccharomyces cerevisiae (strain ATCC 204508 / S288c)</name>
    <name type="common">Baker's yeast</name>
    <dbReference type="NCBI Taxonomy" id="559292"/>
    <lineage>
        <taxon>Eukaryota</taxon>
        <taxon>Fungi</taxon>
        <taxon>Dikarya</taxon>
        <taxon>Ascomycota</taxon>
        <taxon>Saccharomycotina</taxon>
        <taxon>Saccharomycetes</taxon>
        <taxon>Saccharomycetales</taxon>
        <taxon>Saccharomycetaceae</taxon>
        <taxon>Saccharomyces</taxon>
    </lineage>
</organism>
<sequence length="396" mass="43749">MSTFNSYSQPKESNDNSHNNVNKSKSLLDIIFGTNVSEWAFSENALMKAMDLKIEQEKTKQQYYKLENLNRSIELFKLASSSGLPINQIHKLFNTDHGVPASSPMKAGGNQPHNNTEGTQSSENLPRLNGSMKSLKPLNMNTVSPTPMSRQPSPYKFPASSSTGGISHSTVTNVQRRANSPARIGASAVAALNDNISIKEEDVARRIPSGTKSQESPLNKKPTSLHSRNLSLPIGKFTNPNIPSTMTSILSFNRDQQQPLSQPLPPPPQQQQDLHTHNLHTIPRKPGMVQKKHRRARSTSSFGVIDLSIIDEAKEKQVQRSPSPIHSNVSVALTSHDKPIESNMKEQPNMLQSVREGRQVHDDLDDRTCSESSSRNESPVRTITKDNSVGKILNST</sequence>
<protein>
    <recommendedName>
        <fullName>Protein BOP3</fullName>
    </recommendedName>
    <alternativeName>
        <fullName>Bypass of PAM1 protein 3</fullName>
    </alternativeName>
</protein>
<reference key="1">
    <citation type="journal article" date="1997" name="Nature">
        <title>The nucleotide sequence of Saccharomyces cerevisiae chromosome XIV and its evolutionary implications.</title>
        <authorList>
            <person name="Philippsen P."/>
            <person name="Kleine K."/>
            <person name="Poehlmann R."/>
            <person name="Duesterhoeft A."/>
            <person name="Hamberg K."/>
            <person name="Hegemann J.H."/>
            <person name="Obermaier B."/>
            <person name="Urrestarazu L.A."/>
            <person name="Aert R."/>
            <person name="Albermann K."/>
            <person name="Altmann R."/>
            <person name="Andre B."/>
            <person name="Baladron V."/>
            <person name="Ballesta J.P.G."/>
            <person name="Becam A.-M."/>
            <person name="Beinhauer J.D."/>
            <person name="Boskovic J."/>
            <person name="Buitrago M.J."/>
            <person name="Bussereau F."/>
            <person name="Coster F."/>
            <person name="Crouzet M."/>
            <person name="D'Angelo M."/>
            <person name="Dal Pero F."/>
            <person name="De Antoni A."/>
            <person name="del Rey F."/>
            <person name="Doignon F."/>
            <person name="Domdey H."/>
            <person name="Dubois E."/>
            <person name="Fiedler T.A."/>
            <person name="Fleig U."/>
            <person name="Floeth M."/>
            <person name="Fritz C."/>
            <person name="Gaillardin C."/>
            <person name="Garcia-Cantalejo J.M."/>
            <person name="Glansdorff N."/>
            <person name="Goffeau A."/>
            <person name="Gueldener U."/>
            <person name="Herbert C.J."/>
            <person name="Heumann K."/>
            <person name="Heuss-Neitzel D."/>
            <person name="Hilbert H."/>
            <person name="Hinni K."/>
            <person name="Iraqui Houssaini I."/>
            <person name="Jacquet M."/>
            <person name="Jimenez A."/>
            <person name="Jonniaux J.-L."/>
            <person name="Karpfinger-Hartl L."/>
            <person name="Lanfranchi G."/>
            <person name="Lepingle A."/>
            <person name="Levesque H."/>
            <person name="Lyck R."/>
            <person name="Maftahi M."/>
            <person name="Mallet L."/>
            <person name="Maurer C.T.C."/>
            <person name="Messenguy F."/>
            <person name="Mewes H.-W."/>
            <person name="Moestl D."/>
            <person name="Nasr F."/>
            <person name="Nicaud J.-M."/>
            <person name="Niedenthal R.K."/>
            <person name="Pandolfo D."/>
            <person name="Pierard A."/>
            <person name="Piravandi E."/>
            <person name="Planta R.J."/>
            <person name="Pohl T.M."/>
            <person name="Purnelle B."/>
            <person name="Rebischung C."/>
            <person name="Remacha M.A."/>
            <person name="Revuelta J.L."/>
            <person name="Rinke M."/>
            <person name="Saiz J.E."/>
            <person name="Sartorello F."/>
            <person name="Scherens B."/>
            <person name="Sen-Gupta M."/>
            <person name="Soler-Mira A."/>
            <person name="Urbanus J.H.M."/>
            <person name="Valle G."/>
            <person name="Van Dyck L."/>
            <person name="Verhasselt P."/>
            <person name="Vierendeels F."/>
            <person name="Vissers S."/>
            <person name="Voet M."/>
            <person name="Volckaert G."/>
            <person name="Wach A."/>
            <person name="Wambutt R."/>
            <person name="Wedler H."/>
            <person name="Zollner A."/>
            <person name="Hani J."/>
        </authorList>
    </citation>
    <scope>NUCLEOTIDE SEQUENCE [LARGE SCALE GENOMIC DNA]</scope>
    <source>
        <strain>ATCC 204508 / S288c</strain>
    </source>
</reference>
<reference key="2">
    <citation type="journal article" date="2014" name="G3 (Bethesda)">
        <title>The reference genome sequence of Saccharomyces cerevisiae: Then and now.</title>
        <authorList>
            <person name="Engel S.R."/>
            <person name="Dietrich F.S."/>
            <person name="Fisk D.G."/>
            <person name="Binkley G."/>
            <person name="Balakrishnan R."/>
            <person name="Costanzo M.C."/>
            <person name="Dwight S.S."/>
            <person name="Hitz B.C."/>
            <person name="Karra K."/>
            <person name="Nash R.S."/>
            <person name="Weng S."/>
            <person name="Wong E.D."/>
            <person name="Lloyd P."/>
            <person name="Skrzypek M.S."/>
            <person name="Miyasato S.R."/>
            <person name="Simison M."/>
            <person name="Cherry J.M."/>
        </authorList>
    </citation>
    <scope>GENOME REANNOTATION</scope>
    <source>
        <strain>ATCC 204508 / S288c</strain>
    </source>
</reference>
<reference key="3">
    <citation type="journal article" date="1996" name="Yeast">
        <title>The sequence of 12.8 kb from the left arm of chromosome XIV reveals a sigma element, a pro-tRNA and six complete open reading frames, one of which encodes a protein similar to the human leukotriene A4 hydrolase.</title>
        <authorList>
            <person name="Nasr F."/>
            <person name="Becam A.-M."/>
            <person name="Herbert C.J."/>
        </authorList>
    </citation>
    <scope>NUCLEOTIDE SEQUENCE [GENOMIC DNA] OF 1-345</scope>
    <source>
        <strain>ATCC 96604 / S288c / FY1679</strain>
    </source>
</reference>
<reference key="4">
    <citation type="journal article" date="2003" name="Nature">
        <title>Global analysis of protein localization in budding yeast.</title>
        <authorList>
            <person name="Huh W.-K."/>
            <person name="Falvo J.V."/>
            <person name="Gerke L.C."/>
            <person name="Carroll A.S."/>
            <person name="Howson R.W."/>
            <person name="Weissman J.S."/>
            <person name="O'Shea E.K."/>
        </authorList>
    </citation>
    <scope>SUBCELLULAR LOCATION [LARGE SCALE ANALYSIS]</scope>
</reference>
<reference key="5">
    <citation type="journal article" date="2005" name="Biochem. Biophys. Res. Commun.">
        <title>Overexpression of Bop3 confers resistance to methylmercury in Saccharomyces cerevisiae through interaction with other proteins such as Fkh1, Rts1, and Msn2.</title>
        <authorList>
            <person name="Hwang G.-W."/>
            <person name="Furuoya Y."/>
            <person name="Hiroshima A."/>
            <person name="Furuchi T."/>
            <person name="Naganuma A."/>
        </authorList>
    </citation>
    <scope>FUNCTION</scope>
</reference>
<comment type="function">
    <text evidence="3">Involved in resistance to methylmercury. Overexpression suppresses a PAM1-SLV3 double null mutation.</text>
</comment>
<comment type="subcellular location">
    <subcellularLocation>
        <location evidence="2">Cytoplasm</location>
    </subcellularLocation>
    <subcellularLocation>
        <location evidence="2">Nucleus</location>
    </subcellularLocation>
</comment>